<organism>
    <name type="scientific">Penicillium citrinum</name>
    <dbReference type="NCBI Taxonomy" id="5077"/>
    <lineage>
        <taxon>Eukaryota</taxon>
        <taxon>Fungi</taxon>
        <taxon>Dikarya</taxon>
        <taxon>Ascomycota</taxon>
        <taxon>Pezizomycotina</taxon>
        <taxon>Eurotiomycetes</taxon>
        <taxon>Eurotiomycetidae</taxon>
        <taxon>Eurotiales</taxon>
        <taxon>Aspergillaceae</taxon>
        <taxon>Penicillium</taxon>
    </lineage>
</organism>
<sequence length="441" mass="48614">MTKFLAGAAIVLAVAFGSFFSQSSTVTPPAPRYLPNDWDSTCTISKSGAYEVYSGDNSFSTSSADHLSALKIHPNINSTNWEQWEFDGSSQTGLSSVLLVFSRDPSYSFFGQGNLRIEFYIALPDGKRVEVLDYLEESTVVHCPGRYTAGMWNSTDRSYSFRIDDNMKNAQLSFDSAKIHGKFNVTSDTSSALADGTLWTGKDDRKGVSELSPGLFYAVPIPGGFVQMDATLESGKRLVFKGKGGSTRLWAKAGWLNLCGGWKNIRGWAGPYTVVYWELISRINKGVKYTTGLLFRDGELLVGTRNGNISQTEDYTVFEDLYGGEVKGSFADQSTGHNLKFVSPDQEKEWSFDIEHMHSFVEFRAPGEDEYGNKGLGQSGFTNRVSGGEVGEDRAYEGRGITEKCRWPKEFGKLALAIASGAGFFGPKFQMIFIKVVSYLV</sequence>
<gene>
    <name evidence="4" type="primary">gkaB</name>
</gene>
<accession>A0A8F4NUM7</accession>
<protein>
    <recommendedName>
        <fullName evidence="4">Hexane cyclase gkaB</fullName>
        <ecNumber evidence="3">5.5.1.-</ecNumber>
    </recommendedName>
    <alternativeName>
        <fullName evidence="4">GKK1032 biosynthesis cluster protein B</fullName>
    </alternativeName>
</protein>
<name>GKAB_PENCI</name>
<dbReference type="EC" id="5.5.1.-" evidence="3"/>
<dbReference type="EMBL" id="MW690135">
    <property type="protein sequence ID" value="QXF14611.1"/>
    <property type="molecule type" value="Genomic_DNA"/>
</dbReference>
<dbReference type="SMR" id="A0A8F4NUM7"/>
<dbReference type="GO" id="GO:0016853">
    <property type="term" value="F:isomerase activity"/>
    <property type="evidence" value="ECO:0007669"/>
    <property type="project" value="UniProtKB-KW"/>
</dbReference>
<dbReference type="InterPro" id="IPR054499">
    <property type="entry name" value="DA_C"/>
</dbReference>
<dbReference type="Pfam" id="PF22903">
    <property type="entry name" value="DA_C"/>
    <property type="match status" value="1"/>
</dbReference>
<dbReference type="Pfam" id="PF24137">
    <property type="entry name" value="DA_N"/>
    <property type="match status" value="1"/>
</dbReference>
<comment type="function">
    <text evidence="3 6">Hexane cyclase; part of the gene cluster that mediates the biosynthesis of GKK1032, fungal natural products containing a macrocyclic para-cyclophane connected to a decahydrofluorene ring system that show potent antitumor activities (PubMed:33834778). Within the pathway, gkaB functions synergistically with gkaX and gkaZ to form the cyclophane (PubMed:33834778). The pathway begins with the PKS-NRPS gkaA which, with the help of the trans-enoyl reductase gkaC, synthesizes the polyketide-tyrosyl acyl thioester product which can be reductively off-loaded by the terminal reductase (R) domain in gkaA. The alpha/beta hydrolase gkaG is then required to catalyze the subsequent Knoevenagel condensation that affords the 3-pyrrolin-2-one ring, whereas the three proteins gkaB, gkaX and gkaZ then function synergistically to form the cyclophane (Probable).</text>
</comment>
<comment type="pathway">
    <text evidence="3">Mycotoxin biosynthesis.</text>
</comment>
<comment type="similarity">
    <text evidence="5">Belongs to the Diels-Alderase family.</text>
</comment>
<keyword id="KW-0325">Glycoprotein</keyword>
<keyword id="KW-0413">Isomerase</keyword>
<keyword id="KW-0732">Signal</keyword>
<keyword id="KW-0843">Virulence</keyword>
<proteinExistence type="evidence at protein level"/>
<reference key="1">
    <citation type="journal article" date="2021" name="J. Am. Chem. Soc.">
        <title>Biosynthesis of para-cyclophane-containing hirsutellone family of fungal natural products.</title>
        <authorList>
            <person name="Ohashi M."/>
            <person name="Kakule T.B."/>
            <person name="Tang M.C."/>
            <person name="Jamieson C.S."/>
            <person name="Liu M."/>
            <person name="Zhao Y.L."/>
            <person name="Houk K.N."/>
            <person name="Tang Y."/>
        </authorList>
    </citation>
    <scope>NUCLEOTIDE SEQUENCE [GENOMIC DNA]</scope>
    <scope>FUNCTION</scope>
    <scope>CATALYTIC ACTIVITY</scope>
    <scope>PATHWAY</scope>
    <source>
        <strain>DSM 1997</strain>
    </source>
</reference>
<feature type="signal peptide" evidence="1">
    <location>
        <begin position="1"/>
        <end position="25"/>
    </location>
</feature>
<feature type="chain" id="PRO_5034704493" description="Hexane cyclase gkaB">
    <location>
        <begin position="26"/>
        <end position="441"/>
    </location>
</feature>
<feature type="glycosylation site" description="N-linked (GlcNAc...) asparagine" evidence="2">
    <location>
        <position position="77"/>
    </location>
</feature>
<feature type="glycosylation site" description="N-linked (GlcNAc...) asparagine" evidence="2">
    <location>
        <position position="153"/>
    </location>
</feature>
<feature type="glycosylation site" description="N-linked (GlcNAc...) asparagine" evidence="2">
    <location>
        <position position="184"/>
    </location>
</feature>
<feature type="glycosylation site" description="N-linked (GlcNAc...) asparagine" evidence="2">
    <location>
        <position position="308"/>
    </location>
</feature>
<evidence type="ECO:0000255" key="1"/>
<evidence type="ECO:0000255" key="2">
    <source>
        <dbReference type="PROSITE-ProRule" id="PRU00498"/>
    </source>
</evidence>
<evidence type="ECO:0000269" key="3">
    <source>
    </source>
</evidence>
<evidence type="ECO:0000303" key="4">
    <source>
    </source>
</evidence>
<evidence type="ECO:0000305" key="5"/>
<evidence type="ECO:0000305" key="6">
    <source>
    </source>
</evidence>